<protein>
    <recommendedName>
        <fullName>Lysine--tRNA ligase</fullName>
        <ecNumber>6.1.1.6</ecNumber>
    </recommendedName>
    <alternativeName>
        <fullName>Lysyl-tRNA synthetase</fullName>
        <shortName>LysRS</shortName>
    </alternativeName>
</protein>
<keyword id="KW-0030">Aminoacyl-tRNA synthetase</keyword>
<keyword id="KW-0067">ATP-binding</keyword>
<keyword id="KW-0963">Cytoplasm</keyword>
<keyword id="KW-0436">Ligase</keyword>
<keyword id="KW-0460">Magnesium</keyword>
<keyword id="KW-0479">Metal-binding</keyword>
<keyword id="KW-0547">Nucleotide-binding</keyword>
<keyword id="KW-0648">Protein biosynthesis</keyword>
<keyword id="KW-1185">Reference proteome</keyword>
<gene>
    <name type="primary">lysS</name>
    <name type="ordered locus">TM_1705</name>
</gene>
<comment type="catalytic activity">
    <reaction>
        <text>tRNA(Lys) + L-lysine + ATP = L-lysyl-tRNA(Lys) + AMP + diphosphate</text>
        <dbReference type="Rhea" id="RHEA:20792"/>
        <dbReference type="Rhea" id="RHEA-COMP:9696"/>
        <dbReference type="Rhea" id="RHEA-COMP:9697"/>
        <dbReference type="ChEBI" id="CHEBI:30616"/>
        <dbReference type="ChEBI" id="CHEBI:32551"/>
        <dbReference type="ChEBI" id="CHEBI:33019"/>
        <dbReference type="ChEBI" id="CHEBI:78442"/>
        <dbReference type="ChEBI" id="CHEBI:78529"/>
        <dbReference type="ChEBI" id="CHEBI:456215"/>
        <dbReference type="EC" id="6.1.1.6"/>
    </reaction>
</comment>
<comment type="cofactor">
    <cofactor evidence="1">
        <name>Mg(2+)</name>
        <dbReference type="ChEBI" id="CHEBI:18420"/>
    </cofactor>
    <text evidence="1">Binds 3 Mg(2+) ions per subunit.</text>
</comment>
<comment type="subunit">
    <text evidence="1">Homodimer.</text>
</comment>
<comment type="subcellular location">
    <subcellularLocation>
        <location evidence="1">Cytoplasm</location>
    </subcellularLocation>
</comment>
<comment type="similarity">
    <text evidence="2">Belongs to the class-II aminoacyl-tRNA synthetase family.</text>
</comment>
<accession>Q9X231</accession>
<name>SYK_THEMA</name>
<feature type="chain" id="PRO_0000152696" description="Lysine--tRNA ligase">
    <location>
        <begin position="1"/>
        <end position="502"/>
    </location>
</feature>
<feature type="binding site" evidence="1">
    <location>
        <position position="398"/>
    </location>
    <ligand>
        <name>Mg(2+)</name>
        <dbReference type="ChEBI" id="CHEBI:18420"/>
        <label>1</label>
    </ligand>
</feature>
<feature type="binding site" evidence="1">
    <location>
        <position position="405"/>
    </location>
    <ligand>
        <name>Mg(2+)</name>
        <dbReference type="ChEBI" id="CHEBI:18420"/>
        <label>1</label>
    </ligand>
</feature>
<feature type="binding site" evidence="1">
    <location>
        <position position="405"/>
    </location>
    <ligand>
        <name>Mg(2+)</name>
        <dbReference type="ChEBI" id="CHEBI:18420"/>
        <label>2</label>
    </ligand>
</feature>
<sequence length="502" mass="58998">MLKEFKEQRLKEIQELRSMGIEPYPYKFEKELTAREIREKYDYLQAGEVLESEKLSFAGRVMSIRHHGKTAFFHMKDDTGRIQAYIKADSVGKEKMDLFKRHVKIGDFVGVRGFPFKSKTGELTIYVQEYTLLSKALRPLPEKWHGIKDKEIIYRQRYLELIVNDEAIERFKKRFKAVRVIREFLNSRGFIEVETPILHYVTGGAEARPFVTHLNVFDIDMYLRIAPELYLKRLIVGGFEKIYEIGKNFRNEGISYKHSPEFTSIEIYQAYADYNDMMDLTEELIVEVVKRTCGTLKISYQGKEIDFTPPWKRVRMRDFLKEKLGVDILEDPDEVLLKKLEEHGVELEIKNRAHLIDKLRDLVEEELVNPTFIIDHPVVISPLAKRHREDPRLTERFELIIFGREIANAFSELNDPVDQYQRFLEQAKMREEGDEEAHMMDLDFVRALEYGMPPTGGLGIGLDRLFMFITDSPTIRDVIPFPIVKPKKFEEEEAEFEGGFEE</sequence>
<organism>
    <name type="scientific">Thermotoga maritima (strain ATCC 43589 / DSM 3109 / JCM 10099 / NBRC 100826 / MSB8)</name>
    <dbReference type="NCBI Taxonomy" id="243274"/>
    <lineage>
        <taxon>Bacteria</taxon>
        <taxon>Thermotogati</taxon>
        <taxon>Thermotogota</taxon>
        <taxon>Thermotogae</taxon>
        <taxon>Thermotogales</taxon>
        <taxon>Thermotogaceae</taxon>
        <taxon>Thermotoga</taxon>
    </lineage>
</organism>
<dbReference type="EC" id="6.1.1.6"/>
<dbReference type="EMBL" id="AE000512">
    <property type="protein sequence ID" value="AAD36772.1"/>
    <property type="molecule type" value="Genomic_DNA"/>
</dbReference>
<dbReference type="PIR" id="C72221">
    <property type="entry name" value="C72221"/>
</dbReference>
<dbReference type="RefSeq" id="NP_229505.1">
    <property type="nucleotide sequence ID" value="NC_000853.1"/>
</dbReference>
<dbReference type="RefSeq" id="WP_004082221.1">
    <property type="nucleotide sequence ID" value="NC_000853.1"/>
</dbReference>
<dbReference type="SMR" id="Q9X231"/>
<dbReference type="FunCoup" id="Q9X231">
    <property type="interactions" value="437"/>
</dbReference>
<dbReference type="STRING" id="243274.TM_1705"/>
<dbReference type="PaxDb" id="243274-THEMA_05715"/>
<dbReference type="EnsemblBacteria" id="AAD36772">
    <property type="protein sequence ID" value="AAD36772"/>
    <property type="gene ID" value="TM_1705"/>
</dbReference>
<dbReference type="KEGG" id="tma:TM1705"/>
<dbReference type="KEGG" id="tmi:THEMA_05715"/>
<dbReference type="KEGG" id="tmm:Tmari_1713"/>
<dbReference type="KEGG" id="tmw:THMA_1747"/>
<dbReference type="eggNOG" id="COG1190">
    <property type="taxonomic scope" value="Bacteria"/>
</dbReference>
<dbReference type="InParanoid" id="Q9X231"/>
<dbReference type="OrthoDB" id="9802326at2"/>
<dbReference type="Proteomes" id="UP000008183">
    <property type="component" value="Chromosome"/>
</dbReference>
<dbReference type="GO" id="GO:0005737">
    <property type="term" value="C:cytoplasm"/>
    <property type="evidence" value="ECO:0000318"/>
    <property type="project" value="GO_Central"/>
</dbReference>
<dbReference type="GO" id="GO:0005829">
    <property type="term" value="C:cytosol"/>
    <property type="evidence" value="ECO:0000318"/>
    <property type="project" value="GO_Central"/>
</dbReference>
<dbReference type="GO" id="GO:0005524">
    <property type="term" value="F:ATP binding"/>
    <property type="evidence" value="ECO:0007669"/>
    <property type="project" value="UniProtKB-UniRule"/>
</dbReference>
<dbReference type="GO" id="GO:0004824">
    <property type="term" value="F:lysine-tRNA ligase activity"/>
    <property type="evidence" value="ECO:0000318"/>
    <property type="project" value="GO_Central"/>
</dbReference>
<dbReference type="GO" id="GO:0000287">
    <property type="term" value="F:magnesium ion binding"/>
    <property type="evidence" value="ECO:0007669"/>
    <property type="project" value="UniProtKB-UniRule"/>
</dbReference>
<dbReference type="GO" id="GO:0000049">
    <property type="term" value="F:tRNA binding"/>
    <property type="evidence" value="ECO:0000318"/>
    <property type="project" value="GO_Central"/>
</dbReference>
<dbReference type="GO" id="GO:0006430">
    <property type="term" value="P:lysyl-tRNA aminoacylation"/>
    <property type="evidence" value="ECO:0000318"/>
    <property type="project" value="GO_Central"/>
</dbReference>
<dbReference type="CDD" id="cd00775">
    <property type="entry name" value="LysRS_core"/>
    <property type="match status" value="1"/>
</dbReference>
<dbReference type="CDD" id="cd04322">
    <property type="entry name" value="LysRS_N"/>
    <property type="match status" value="1"/>
</dbReference>
<dbReference type="FunFam" id="2.40.50.140:FF:000024">
    <property type="entry name" value="Lysine--tRNA ligase"/>
    <property type="match status" value="1"/>
</dbReference>
<dbReference type="FunFam" id="3.30.930.10:FF:000238">
    <property type="entry name" value="Lysine--tRNA ligase"/>
    <property type="match status" value="1"/>
</dbReference>
<dbReference type="Gene3D" id="3.30.930.10">
    <property type="entry name" value="Bira Bifunctional Protein, Domain 2"/>
    <property type="match status" value="1"/>
</dbReference>
<dbReference type="Gene3D" id="2.40.50.140">
    <property type="entry name" value="Nucleic acid-binding proteins"/>
    <property type="match status" value="1"/>
</dbReference>
<dbReference type="HAMAP" id="MF_00252">
    <property type="entry name" value="Lys_tRNA_synth_class2"/>
    <property type="match status" value="1"/>
</dbReference>
<dbReference type="InterPro" id="IPR004364">
    <property type="entry name" value="Aa-tRNA-synt_II"/>
</dbReference>
<dbReference type="InterPro" id="IPR006195">
    <property type="entry name" value="aa-tRNA-synth_II"/>
</dbReference>
<dbReference type="InterPro" id="IPR045864">
    <property type="entry name" value="aa-tRNA-synth_II/BPL/LPL"/>
</dbReference>
<dbReference type="InterPro" id="IPR002313">
    <property type="entry name" value="Lys-tRNA-ligase_II"/>
</dbReference>
<dbReference type="InterPro" id="IPR034762">
    <property type="entry name" value="Lys-tRNA-ligase_II_bac/euk"/>
</dbReference>
<dbReference type="InterPro" id="IPR044136">
    <property type="entry name" value="Lys-tRNA-ligase_II_N"/>
</dbReference>
<dbReference type="InterPro" id="IPR018149">
    <property type="entry name" value="Lys-tRNA-synth_II_C"/>
</dbReference>
<dbReference type="InterPro" id="IPR012340">
    <property type="entry name" value="NA-bd_OB-fold"/>
</dbReference>
<dbReference type="InterPro" id="IPR004365">
    <property type="entry name" value="NA-bd_OB_tRNA"/>
</dbReference>
<dbReference type="NCBIfam" id="TIGR00499">
    <property type="entry name" value="lysS_bact"/>
    <property type="match status" value="1"/>
</dbReference>
<dbReference type="NCBIfam" id="NF001756">
    <property type="entry name" value="PRK00484.1"/>
    <property type="match status" value="1"/>
</dbReference>
<dbReference type="PANTHER" id="PTHR42918:SF15">
    <property type="entry name" value="LYSINE--TRNA LIGASE, CHLOROPLASTIC_MITOCHONDRIAL"/>
    <property type="match status" value="1"/>
</dbReference>
<dbReference type="PANTHER" id="PTHR42918">
    <property type="entry name" value="LYSYL-TRNA SYNTHETASE"/>
    <property type="match status" value="1"/>
</dbReference>
<dbReference type="Pfam" id="PF00152">
    <property type="entry name" value="tRNA-synt_2"/>
    <property type="match status" value="1"/>
</dbReference>
<dbReference type="Pfam" id="PF01336">
    <property type="entry name" value="tRNA_anti-codon"/>
    <property type="match status" value="1"/>
</dbReference>
<dbReference type="PIRSF" id="PIRSF039101">
    <property type="entry name" value="LysRS2"/>
    <property type="match status" value="1"/>
</dbReference>
<dbReference type="PRINTS" id="PR00982">
    <property type="entry name" value="TRNASYNTHLYS"/>
</dbReference>
<dbReference type="SUPFAM" id="SSF55681">
    <property type="entry name" value="Class II aaRS and biotin synthetases"/>
    <property type="match status" value="1"/>
</dbReference>
<dbReference type="SUPFAM" id="SSF50249">
    <property type="entry name" value="Nucleic acid-binding proteins"/>
    <property type="match status" value="1"/>
</dbReference>
<dbReference type="PROSITE" id="PS50862">
    <property type="entry name" value="AA_TRNA_LIGASE_II"/>
    <property type="match status" value="1"/>
</dbReference>
<proteinExistence type="inferred from homology"/>
<reference key="1">
    <citation type="journal article" date="1999" name="Nature">
        <title>Evidence for lateral gene transfer between Archaea and Bacteria from genome sequence of Thermotoga maritima.</title>
        <authorList>
            <person name="Nelson K.E."/>
            <person name="Clayton R.A."/>
            <person name="Gill S.R."/>
            <person name="Gwinn M.L."/>
            <person name="Dodson R.J."/>
            <person name="Haft D.H."/>
            <person name="Hickey E.K."/>
            <person name="Peterson J.D."/>
            <person name="Nelson W.C."/>
            <person name="Ketchum K.A."/>
            <person name="McDonald L.A."/>
            <person name="Utterback T.R."/>
            <person name="Malek J.A."/>
            <person name="Linher K.D."/>
            <person name="Garrett M.M."/>
            <person name="Stewart A.M."/>
            <person name="Cotton M.D."/>
            <person name="Pratt M.S."/>
            <person name="Phillips C.A."/>
            <person name="Richardson D.L."/>
            <person name="Heidelberg J.F."/>
            <person name="Sutton G.G."/>
            <person name="Fleischmann R.D."/>
            <person name="Eisen J.A."/>
            <person name="White O."/>
            <person name="Salzberg S.L."/>
            <person name="Smith H.O."/>
            <person name="Venter J.C."/>
            <person name="Fraser C.M."/>
        </authorList>
    </citation>
    <scope>NUCLEOTIDE SEQUENCE [LARGE SCALE GENOMIC DNA]</scope>
    <source>
        <strain>ATCC 43589 / DSM 3109 / JCM 10099 / NBRC 100826 / MSB8</strain>
    </source>
</reference>
<evidence type="ECO:0000250" key="1"/>
<evidence type="ECO:0000305" key="2"/>